<proteinExistence type="evidence at protein level"/>
<organismHost>
    <name type="scientific">Aves</name>
    <dbReference type="NCBI Taxonomy" id="8782"/>
</organismHost>
<organismHost>
    <name type="scientific">Cetacea</name>
    <name type="common">whales</name>
    <dbReference type="NCBI Taxonomy" id="9721"/>
</organismHost>
<organismHost>
    <name type="scientific">Homo sapiens</name>
    <name type="common">Human</name>
    <dbReference type="NCBI Taxonomy" id="9606"/>
</organismHost>
<organismHost>
    <name type="scientific">Phocidae</name>
    <name type="common">true seals</name>
    <dbReference type="NCBI Taxonomy" id="9709"/>
</organismHost>
<organismHost>
    <name type="scientific">Sus scrofa</name>
    <name type="common">Pig</name>
    <dbReference type="NCBI Taxonomy" id="9823"/>
</organismHost>
<dbReference type="EMBL" id="K03338">
    <property type="protein sequence ID" value="AAA43195.1"/>
    <property type="molecule type" value="Genomic_RNA"/>
</dbReference>
<dbReference type="PDB" id="6Y5L">
    <property type="method" value="EM"/>
    <property type="resolution" value="3.60 A"/>
    <property type="chains" value="A/C/E=289-325"/>
</dbReference>
<dbReference type="PDBsum" id="6Y5L"/>
<dbReference type="EMDB" id="EMD-10701"/>
<dbReference type="SMR" id="P04663"/>
<dbReference type="IntAct" id="P04663">
    <property type="interactions" value="1"/>
</dbReference>
<dbReference type="GlyCosmos" id="P04663">
    <property type="glycosylation" value="6 sites, No reported glycans"/>
</dbReference>
<dbReference type="GO" id="GO:0020002">
    <property type="term" value="C:host cell plasma membrane"/>
    <property type="evidence" value="ECO:0007669"/>
    <property type="project" value="UniProtKB-SubCell"/>
</dbReference>
<dbReference type="GO" id="GO:0016020">
    <property type="term" value="C:membrane"/>
    <property type="evidence" value="ECO:0007669"/>
    <property type="project" value="UniProtKB-KW"/>
</dbReference>
<dbReference type="GO" id="GO:0019031">
    <property type="term" value="C:viral envelope"/>
    <property type="evidence" value="ECO:0007669"/>
    <property type="project" value="UniProtKB-KW"/>
</dbReference>
<dbReference type="GO" id="GO:0055036">
    <property type="term" value="C:virion membrane"/>
    <property type="evidence" value="ECO:0007669"/>
    <property type="project" value="UniProtKB-SubCell"/>
</dbReference>
<dbReference type="GO" id="GO:0046789">
    <property type="term" value="F:host cell surface receptor binding"/>
    <property type="evidence" value="ECO:0007669"/>
    <property type="project" value="InterPro"/>
</dbReference>
<dbReference type="GO" id="GO:0075512">
    <property type="term" value="P:clathrin-dependent endocytosis of virus by host cell"/>
    <property type="evidence" value="ECO:0007669"/>
    <property type="project" value="UniProtKB-KW"/>
</dbReference>
<dbReference type="GO" id="GO:0039654">
    <property type="term" value="P:fusion of virus membrane with host endosome membrane"/>
    <property type="evidence" value="ECO:0007669"/>
    <property type="project" value="UniProtKB-KW"/>
</dbReference>
<dbReference type="GO" id="GO:0019064">
    <property type="term" value="P:fusion of virus membrane with host plasma membrane"/>
    <property type="evidence" value="ECO:0007669"/>
    <property type="project" value="InterPro"/>
</dbReference>
<dbReference type="GO" id="GO:0019062">
    <property type="term" value="P:virion attachment to host cell"/>
    <property type="evidence" value="ECO:0007669"/>
    <property type="project" value="UniProtKB-KW"/>
</dbReference>
<dbReference type="FunFam" id="3.90.209.20:FF:000001">
    <property type="entry name" value="Hemagglutinin"/>
    <property type="match status" value="1"/>
</dbReference>
<dbReference type="Gene3D" id="3.90.209.20">
    <property type="match status" value="1"/>
</dbReference>
<dbReference type="Gene3D" id="2.10.77.10">
    <property type="entry name" value="Hemagglutinin Chain A, Domain 2"/>
    <property type="match status" value="1"/>
</dbReference>
<dbReference type="InterPro" id="IPR008980">
    <property type="entry name" value="Capsid_hemagglutn"/>
</dbReference>
<dbReference type="InterPro" id="IPR013828">
    <property type="entry name" value="Hemagglutn_HA1_a/b_dom_sf"/>
</dbReference>
<dbReference type="InterPro" id="IPR000149">
    <property type="entry name" value="Hemagglutn_influenz_A"/>
</dbReference>
<dbReference type="InterPro" id="IPR001364">
    <property type="entry name" value="Hemagglutn_influenz_A/B"/>
</dbReference>
<dbReference type="Pfam" id="PF00509">
    <property type="entry name" value="Hemagglutinin"/>
    <property type="match status" value="1"/>
</dbReference>
<dbReference type="PRINTS" id="PR00330">
    <property type="entry name" value="HEMAGGLUTN1"/>
</dbReference>
<dbReference type="PRINTS" id="PR00329">
    <property type="entry name" value="HEMAGGLUTN12"/>
</dbReference>
<dbReference type="SUPFAM" id="SSF49818">
    <property type="entry name" value="Viral protein domain"/>
    <property type="match status" value="1"/>
</dbReference>
<reference key="1">
    <citation type="journal article" date="1981" name="J. Virol.">
        <title>Antigenic drift in the hemagglutinin of the Hong Kong influenza subtype: correlation of amino acid changes with alterations in viral antigenicity.</title>
        <authorList>
            <person name="Sleigh M.J."/>
            <person name="Both G.W."/>
            <person name="Underwood P.A."/>
            <person name="Bender V.J."/>
        </authorList>
    </citation>
    <scope>NUCLEOTIDE SEQUENCE [GENOMIC RNA]</scope>
</reference>
<accession>P04663</accession>
<organism>
    <name type="scientific">Influenza A virus (strain A/Qu/7/1970 H3N2)</name>
    <dbReference type="NCBI Taxonomy" id="221016"/>
    <lineage>
        <taxon>Viruses</taxon>
        <taxon>Riboviria</taxon>
        <taxon>Orthornavirae</taxon>
        <taxon>Negarnaviricota</taxon>
        <taxon>Polyploviricotina</taxon>
        <taxon>Insthoviricetes</taxon>
        <taxon>Articulavirales</taxon>
        <taxon>Orthomyxoviridae</taxon>
        <taxon>Alphainfluenzavirus</taxon>
        <taxon>Alphainfluenzavirus influenzae</taxon>
        <taxon>Influenza A virus</taxon>
    </lineage>
</organism>
<name>HEMA_I70A0</name>
<feature type="chain" id="PRO_0000039036" description="Hemagglutinin HA1 chain">
    <location>
        <begin position="1"/>
        <end position="328"/>
    </location>
</feature>
<feature type="glycosylation site" description="N-linked (GlcNAc...) asparagine; by host" evidence="2">
    <location>
        <position position="8"/>
    </location>
</feature>
<feature type="glycosylation site" description="N-linked (GlcNAc...) asparagine; by host" evidence="2">
    <location>
        <position position="22"/>
    </location>
</feature>
<feature type="glycosylation site" description="N-linked (GlcNAc...) asparagine; by host" evidence="2">
    <location>
        <position position="38"/>
    </location>
</feature>
<feature type="glycosylation site" description="N-linked (GlcNAc...) asparagine; by host" evidence="2">
    <location>
        <position position="81"/>
    </location>
</feature>
<feature type="glycosylation site" description="N-linked (GlcNAc...) asparagine; by host" evidence="2">
    <location>
        <position position="165"/>
    </location>
</feature>
<feature type="glycosylation site" description="N-linked (GlcNAc...) asparagine; by host" evidence="2">
    <location>
        <position position="285"/>
    </location>
</feature>
<feature type="disulfide bond" evidence="1">
    <location>
        <begin position="52"/>
        <end position="277"/>
    </location>
</feature>
<feature type="disulfide bond" evidence="1">
    <location>
        <begin position="64"/>
        <end position="76"/>
    </location>
</feature>
<feature type="disulfide bond" evidence="1">
    <location>
        <begin position="97"/>
        <end position="139"/>
    </location>
</feature>
<feature type="disulfide bond" evidence="1">
    <location>
        <begin position="281"/>
        <end position="305"/>
    </location>
</feature>
<feature type="non-terminal residue">
    <location>
        <position position="1"/>
    </location>
</feature>
<feature type="non-terminal residue">
    <location>
        <position position="328"/>
    </location>
</feature>
<protein>
    <recommendedName>
        <fullName>Hemagglutinin</fullName>
    </recommendedName>
    <component>
        <recommendedName>
            <fullName>Hemagglutinin HA1 chain</fullName>
        </recommendedName>
    </component>
</protein>
<comment type="function">
    <text>Binds to sialic acid-containing receptors on the cell surface, bringing about the attachment of the virus particle to the cell. This attachment induces virion internalization of about two third of the virus particles through clathrin-dependent endocytosis and about one third through a clathrin- and caveolin-independent pathway. Plays a major role in the determination of host range restriction and virulence. Class I viral fusion protein. Responsible for penetration of the virus into the cell cytoplasm by mediating the fusion of the membrane of the endocytosed virus particle with the endosomal membrane. Low pH in endosomes induces an irreversible conformational change in HA2, releasing the fusion hydrophobic peptide. Several trimers are required to form a competent fusion pore.</text>
</comment>
<comment type="subunit">
    <text>Homotrimer of disulfide-linked HA1-HA2.</text>
</comment>
<comment type="interaction">
    <interactant intactId="EBI-13951712">
        <id>P04663</id>
    </interactant>
    <interactant intactId="EBI-11052499">
        <id>P0DMV8</id>
        <label>HSPA1A</label>
    </interactant>
    <organismsDiffer>true</organismsDiffer>
    <experiments>4</experiments>
</comment>
<comment type="subcellular location">
    <subcellularLocation>
        <location evidence="3">Virion membrane</location>
        <topology evidence="3">Single-pass type I membrane protein</topology>
    </subcellularLocation>
    <subcellularLocation>
        <location>Host apical cell membrane</location>
        <topology>Single-pass type I membrane protein</topology>
    </subcellularLocation>
    <text>Targeted to the apical plasma membrane in epithelial polarized cells through a signal present in the transmembrane domain. Associated with glycosphingolipid- and cholesterol-enriched detergent-resistant lipid rafts.</text>
</comment>
<comment type="PTM">
    <text evidence="1">In natural infection, inactive HA is matured into HA1 and HA2 outside the cell by one or more trypsin-like, arginine-specific endoprotease secreted by the bronchial epithelial cells. One identified protease that may be involved in this process is secreted in lungs by club cells (By similarity).</text>
</comment>
<comment type="PTM">
    <text evidence="1">Palmitoylated.</text>
</comment>
<comment type="miscellaneous">
    <text>Major glycoprotein, comprises over 80% of the envelope proteins present in virus particle.</text>
</comment>
<comment type="miscellaneous">
    <text>The extent of infection into host organism is determined by HA. Influenza viruses bud from the apical surface of polarized epithelial cells (e.g. bronchial epithelial cells) into lumen of lungs and are therefore usually pneumotropic. The reason is that HA is cleaved by tryptase clara which is restricted to lungs. However, HAs of H5 and H7 pantropic avian viruses subtypes can be cleaved by furin and subtilisin-type enzymes, allowing the virus to grow in other organs than lungs.</text>
</comment>
<comment type="miscellaneous">
    <text>The influenza A genome consist of 8 RNA segments. Genetic variation of hemagglutinin and/or neuraminidase genes results in the emergence of new influenza strains. The mechanism of variation can be the result of point mutations or the result of genetic reassortment between segments of two different strains.</text>
</comment>
<comment type="similarity">
    <text evidence="3">Belongs to the influenza viruses hemagglutinin family.</text>
</comment>
<sequence>QDLPGNDNSTATLCLGHHAVPNGTLVKTITNDQIEVTNATELVQSSSTGKICNNPHRILDGIDCTLIDALLGDPHCDGFQNETWDLFVERSKAFSNCYPYDVPDYASLRSLVASSGTLEFITEGFTWTEVTQNGGSNACKRGPGSGFFSRLNWLTKSGSTYPVLNVTMPNNDNFDKLYIWGVHHPSTNQEQTSLYVQASGRVTVSTRRSQQTIIPNIGSRPWVRGQSSRISIYWTIVKPGDVLVINSNGNLIAPRGYFKMRTGKSSIMRSDAPIDTCISECITPNGSIPNDKPFQNVNKITYGACPKYVKQNTLKLATGMRNVPEKQT</sequence>
<evidence type="ECO:0000250" key="1"/>
<evidence type="ECO:0000255" key="2"/>
<evidence type="ECO:0000305" key="3"/>
<keyword id="KW-0002">3D-structure</keyword>
<keyword id="KW-1167">Clathrin- and caveolin-independent endocytosis of virus by host</keyword>
<keyword id="KW-1165">Clathrin-mediated endocytosis of virus by host</keyword>
<keyword id="KW-1015">Disulfide bond</keyword>
<keyword id="KW-1170">Fusion of virus membrane with host endosomal membrane</keyword>
<keyword id="KW-1168">Fusion of virus membrane with host membrane</keyword>
<keyword id="KW-0325">Glycoprotein</keyword>
<keyword id="KW-0348">Hemagglutinin</keyword>
<keyword id="KW-1032">Host cell membrane</keyword>
<keyword id="KW-1043">Host membrane</keyword>
<keyword id="KW-0945">Host-virus interaction</keyword>
<keyword id="KW-0449">Lipoprotein</keyword>
<keyword id="KW-0472">Membrane</keyword>
<keyword id="KW-0564">Palmitate</keyword>
<keyword id="KW-0812">Transmembrane</keyword>
<keyword id="KW-1161">Viral attachment to host cell</keyword>
<keyword id="KW-0261">Viral envelope protein</keyword>
<keyword id="KW-1162">Viral penetration into host cytoplasm</keyword>
<keyword id="KW-0946">Virion</keyword>
<keyword id="KW-1164">Virus endocytosis by host</keyword>
<keyword id="KW-1160">Virus entry into host cell</keyword>
<gene>
    <name type="primary">HA</name>
</gene>